<accession>B6JES8</accession>
<accession>F8BZD2</accession>
<feature type="chain" id="PRO_1000194200" description="Small ribosomal subunit protein uS12">
    <location>
        <begin position="1"/>
        <end position="123"/>
    </location>
</feature>
<feature type="modified residue" description="3-methylthioaspartic acid" evidence="1">
    <location>
        <position position="89"/>
    </location>
</feature>
<protein>
    <recommendedName>
        <fullName evidence="2">Small ribosomal subunit protein uS12</fullName>
    </recommendedName>
    <alternativeName>
        <fullName evidence="3">30S ribosomal protein S12</fullName>
    </alternativeName>
</protein>
<sequence>MPTINQLIAKPRVLQKSRKKVPALQQSPQKRGVCTRVYTTTPKKPNSALRKVAKVRLTNGFEVIGYIPGEGHNLQEHSVVMIRGGRVKDLPGVRYHILRGVLDTQGVKNRKQRRSKYGAKRPK</sequence>
<name>RS12_AFIC5</name>
<keyword id="KW-0488">Methylation</keyword>
<keyword id="KW-1185">Reference proteome</keyword>
<keyword id="KW-0687">Ribonucleoprotein</keyword>
<keyword id="KW-0689">Ribosomal protein</keyword>
<keyword id="KW-0694">RNA-binding</keyword>
<keyword id="KW-0699">rRNA-binding</keyword>
<keyword id="KW-0820">tRNA-binding</keyword>
<gene>
    <name evidence="2" type="primary">rpsL</name>
    <name type="ordered locus">OCAR_5672</name>
    <name type="ordered locus">OCA5_c23350</name>
</gene>
<dbReference type="EMBL" id="CP001196">
    <property type="protein sequence ID" value="ACI92800.1"/>
    <property type="molecule type" value="Genomic_DNA"/>
</dbReference>
<dbReference type="EMBL" id="CP002826">
    <property type="protein sequence ID" value="AEI07035.1"/>
    <property type="molecule type" value="Genomic_DNA"/>
</dbReference>
<dbReference type="RefSeq" id="WP_012562829.1">
    <property type="nucleotide sequence ID" value="NC_015684.1"/>
</dbReference>
<dbReference type="SMR" id="B6JES8"/>
<dbReference type="STRING" id="504832.OCA5_c23350"/>
<dbReference type="KEGG" id="oca:OCAR_5672"/>
<dbReference type="KEGG" id="ocg:OCA5_c23350"/>
<dbReference type="PATRIC" id="fig|504832.7.peg.2460"/>
<dbReference type="eggNOG" id="COG0048">
    <property type="taxonomic scope" value="Bacteria"/>
</dbReference>
<dbReference type="HOGENOM" id="CLU_104295_1_2_5"/>
<dbReference type="OrthoDB" id="9802366at2"/>
<dbReference type="Proteomes" id="UP000007730">
    <property type="component" value="Chromosome"/>
</dbReference>
<dbReference type="GO" id="GO:0015935">
    <property type="term" value="C:small ribosomal subunit"/>
    <property type="evidence" value="ECO:0007669"/>
    <property type="project" value="InterPro"/>
</dbReference>
<dbReference type="GO" id="GO:0019843">
    <property type="term" value="F:rRNA binding"/>
    <property type="evidence" value="ECO:0007669"/>
    <property type="project" value="UniProtKB-UniRule"/>
</dbReference>
<dbReference type="GO" id="GO:0003735">
    <property type="term" value="F:structural constituent of ribosome"/>
    <property type="evidence" value="ECO:0007669"/>
    <property type="project" value="InterPro"/>
</dbReference>
<dbReference type="GO" id="GO:0000049">
    <property type="term" value="F:tRNA binding"/>
    <property type="evidence" value="ECO:0007669"/>
    <property type="project" value="UniProtKB-UniRule"/>
</dbReference>
<dbReference type="GO" id="GO:0006412">
    <property type="term" value="P:translation"/>
    <property type="evidence" value="ECO:0007669"/>
    <property type="project" value="UniProtKB-UniRule"/>
</dbReference>
<dbReference type="CDD" id="cd03368">
    <property type="entry name" value="Ribosomal_S12"/>
    <property type="match status" value="1"/>
</dbReference>
<dbReference type="FunFam" id="2.40.50.140:FF:000001">
    <property type="entry name" value="30S ribosomal protein S12"/>
    <property type="match status" value="1"/>
</dbReference>
<dbReference type="Gene3D" id="2.40.50.140">
    <property type="entry name" value="Nucleic acid-binding proteins"/>
    <property type="match status" value="1"/>
</dbReference>
<dbReference type="HAMAP" id="MF_00403_B">
    <property type="entry name" value="Ribosomal_uS12_B"/>
    <property type="match status" value="1"/>
</dbReference>
<dbReference type="InterPro" id="IPR012340">
    <property type="entry name" value="NA-bd_OB-fold"/>
</dbReference>
<dbReference type="InterPro" id="IPR006032">
    <property type="entry name" value="Ribosomal_uS12"/>
</dbReference>
<dbReference type="InterPro" id="IPR005679">
    <property type="entry name" value="Ribosomal_uS12_bac"/>
</dbReference>
<dbReference type="NCBIfam" id="TIGR00981">
    <property type="entry name" value="rpsL_bact"/>
    <property type="match status" value="1"/>
</dbReference>
<dbReference type="PANTHER" id="PTHR11652">
    <property type="entry name" value="30S RIBOSOMAL PROTEIN S12 FAMILY MEMBER"/>
    <property type="match status" value="1"/>
</dbReference>
<dbReference type="Pfam" id="PF00164">
    <property type="entry name" value="Ribosom_S12_S23"/>
    <property type="match status" value="1"/>
</dbReference>
<dbReference type="PIRSF" id="PIRSF002133">
    <property type="entry name" value="Ribosomal_S12/S23"/>
    <property type="match status" value="1"/>
</dbReference>
<dbReference type="PRINTS" id="PR01034">
    <property type="entry name" value="RIBOSOMALS12"/>
</dbReference>
<dbReference type="SUPFAM" id="SSF50249">
    <property type="entry name" value="Nucleic acid-binding proteins"/>
    <property type="match status" value="1"/>
</dbReference>
<dbReference type="PROSITE" id="PS00055">
    <property type="entry name" value="RIBOSOMAL_S12"/>
    <property type="match status" value="1"/>
</dbReference>
<evidence type="ECO:0000250" key="1"/>
<evidence type="ECO:0000255" key="2">
    <source>
        <dbReference type="HAMAP-Rule" id="MF_00403"/>
    </source>
</evidence>
<evidence type="ECO:0000305" key="3"/>
<organism>
    <name type="scientific">Afipia carboxidovorans (strain ATCC 49405 / DSM 1227 / KCTC 32145 / OM5)</name>
    <name type="common">Oligotropha carboxidovorans</name>
    <dbReference type="NCBI Taxonomy" id="504832"/>
    <lineage>
        <taxon>Bacteria</taxon>
        <taxon>Pseudomonadati</taxon>
        <taxon>Pseudomonadota</taxon>
        <taxon>Alphaproteobacteria</taxon>
        <taxon>Hyphomicrobiales</taxon>
        <taxon>Nitrobacteraceae</taxon>
        <taxon>Afipia</taxon>
    </lineage>
</organism>
<proteinExistence type="inferred from homology"/>
<comment type="function">
    <text evidence="2">With S4 and S5 plays an important role in translational accuracy.</text>
</comment>
<comment type="function">
    <text evidence="2">Interacts with and stabilizes bases of the 16S rRNA that are involved in tRNA selection in the A site and with the mRNA backbone. Located at the interface of the 30S and 50S subunits, it traverses the body of the 30S subunit contacting proteins on the other side and probably holding the rRNA structure together. The combined cluster of proteins S8, S12 and S17 appears to hold together the shoulder and platform of the 30S subunit.</text>
</comment>
<comment type="subunit">
    <text evidence="2">Part of the 30S ribosomal subunit. Contacts proteins S8 and S17. May interact with IF1 in the 30S initiation complex.</text>
</comment>
<comment type="similarity">
    <text evidence="2">Belongs to the universal ribosomal protein uS12 family.</text>
</comment>
<reference key="1">
    <citation type="journal article" date="2008" name="J. Bacteriol.">
        <title>Genome sequence of the chemolithoautotrophic bacterium Oligotropha carboxidovorans OM5T.</title>
        <authorList>
            <person name="Paul D."/>
            <person name="Bridges S."/>
            <person name="Burgess S.C."/>
            <person name="Dandass Y."/>
            <person name="Lawrence M.L."/>
        </authorList>
    </citation>
    <scope>NUCLEOTIDE SEQUENCE [LARGE SCALE GENOMIC DNA]</scope>
    <source>
        <strain>ATCC 49405 / DSM 1227 / KCTC 32145 / OM5</strain>
    </source>
</reference>
<reference key="2">
    <citation type="journal article" date="2011" name="J. Bacteriol.">
        <title>Complete genome sequences of the chemolithoautotrophic Oligotropha carboxidovorans strains OM4 and OM5.</title>
        <authorList>
            <person name="Volland S."/>
            <person name="Rachinger M."/>
            <person name="Strittmatter A."/>
            <person name="Daniel R."/>
            <person name="Gottschalk G."/>
            <person name="Meyer O."/>
        </authorList>
    </citation>
    <scope>NUCLEOTIDE SEQUENCE [LARGE SCALE GENOMIC DNA]</scope>
    <source>
        <strain>ATCC 49405 / DSM 1227 / KCTC 32145 / OM5</strain>
    </source>
</reference>